<sequence length="532" mass="61893">MEVQRNFFIFAFLFVSFLLWQAWQSQMFLNKKTNEKIDPIFHFIDVKKNKKKIFIKNDVISLVVNMYGGDVEEASLLAYKDTLYSSRPFKLLETGSDFIYQAQSGLIGKDGPDSSINDSRPLYSANKNFFVLGPNEKELRVPIKWVSKNGVIYKKTFILKPNRYDVQIEYDVYNPSKESLNMNIFGQIKQTINLPKKRNVYSGNFALQTFRGAAYSSDDNKYEKYKFDMIANNKNLHIMTESGWIAMLQQYFAVAWIPDNLGKNTIYTSSLDHDTAVIGYKSPIINIPPNSRSIIKSKLWIGPEIQKEMKLVAPNLDLTVDYGWLWFLSQPLFKLLTILYSIIGNWGFSIILITFIMRGLTYPLTKAQYISMAKMRALQPKIQEIKEKFSKDKQRISQEMILLYKKEKINPLGGFLPIFIQMPIFLSLYYMLIGSVELRHAPFLLWIHDLSSQDPYYVLPVIMGLTMFFIQKISSTNHISDPLQKKIMNFMPVIFTAFFLWFPSGLVLYYIISNLVTIIQQKFILSNLEKNR</sequence>
<protein>
    <recommendedName>
        <fullName evidence="1">Membrane protein insertase YidC</fullName>
    </recommendedName>
    <alternativeName>
        <fullName evidence="1">Foldase YidC</fullName>
    </alternativeName>
    <alternativeName>
        <fullName evidence="1">Membrane integrase YidC</fullName>
    </alternativeName>
    <alternativeName>
        <fullName evidence="1">Membrane protein YidC</fullName>
    </alternativeName>
</protein>
<dbReference type="EMBL" id="CP001161">
    <property type="protein sequence ID" value="ACL30401.1"/>
    <property type="molecule type" value="Genomic_DNA"/>
</dbReference>
<dbReference type="RefSeq" id="WP_009873977.1">
    <property type="nucleotide sequence ID" value="NC_011833.1"/>
</dbReference>
<dbReference type="SMR" id="B8D8H9"/>
<dbReference type="KEGG" id="bap:BUAP5A_015"/>
<dbReference type="HOGENOM" id="CLU_016535_3_0_6"/>
<dbReference type="OrthoDB" id="9780552at2"/>
<dbReference type="Proteomes" id="UP000006904">
    <property type="component" value="Chromosome"/>
</dbReference>
<dbReference type="GO" id="GO:0005886">
    <property type="term" value="C:plasma membrane"/>
    <property type="evidence" value="ECO:0007669"/>
    <property type="project" value="UniProtKB-SubCell"/>
</dbReference>
<dbReference type="GO" id="GO:0032977">
    <property type="term" value="F:membrane insertase activity"/>
    <property type="evidence" value="ECO:0007669"/>
    <property type="project" value="InterPro"/>
</dbReference>
<dbReference type="GO" id="GO:0051205">
    <property type="term" value="P:protein insertion into membrane"/>
    <property type="evidence" value="ECO:0007669"/>
    <property type="project" value="TreeGrafter"/>
</dbReference>
<dbReference type="GO" id="GO:0015031">
    <property type="term" value="P:protein transport"/>
    <property type="evidence" value="ECO:0007669"/>
    <property type="project" value="UniProtKB-KW"/>
</dbReference>
<dbReference type="CDD" id="cd20070">
    <property type="entry name" value="5TM_YidC_Alb3"/>
    <property type="match status" value="1"/>
</dbReference>
<dbReference type="CDD" id="cd19961">
    <property type="entry name" value="EcYidC-like_peri"/>
    <property type="match status" value="1"/>
</dbReference>
<dbReference type="Gene3D" id="2.70.98.90">
    <property type="match status" value="1"/>
</dbReference>
<dbReference type="HAMAP" id="MF_01810">
    <property type="entry name" value="YidC_type1"/>
    <property type="match status" value="1"/>
</dbReference>
<dbReference type="InterPro" id="IPR019998">
    <property type="entry name" value="Membr_insert_YidC"/>
</dbReference>
<dbReference type="InterPro" id="IPR028053">
    <property type="entry name" value="Membr_insert_YidC_N"/>
</dbReference>
<dbReference type="InterPro" id="IPR001708">
    <property type="entry name" value="YidC/ALB3/OXA1/COX18"/>
</dbReference>
<dbReference type="InterPro" id="IPR028055">
    <property type="entry name" value="YidC/Oxa/ALB_C"/>
</dbReference>
<dbReference type="InterPro" id="IPR047196">
    <property type="entry name" value="YidC_ALB_C"/>
</dbReference>
<dbReference type="InterPro" id="IPR038221">
    <property type="entry name" value="YidC_periplasmic_sf"/>
</dbReference>
<dbReference type="NCBIfam" id="NF002351">
    <property type="entry name" value="PRK01318.1-1"/>
    <property type="match status" value="1"/>
</dbReference>
<dbReference type="NCBIfam" id="NF002352">
    <property type="entry name" value="PRK01318.1-3"/>
    <property type="match status" value="1"/>
</dbReference>
<dbReference type="NCBIfam" id="TIGR03593">
    <property type="entry name" value="yidC_nterm"/>
    <property type="match status" value="1"/>
</dbReference>
<dbReference type="NCBIfam" id="TIGR03592">
    <property type="entry name" value="yidC_oxa1_cterm"/>
    <property type="match status" value="1"/>
</dbReference>
<dbReference type="PANTHER" id="PTHR12428:SF65">
    <property type="entry name" value="CYTOCHROME C OXIDASE ASSEMBLY PROTEIN COX18, MITOCHONDRIAL"/>
    <property type="match status" value="1"/>
</dbReference>
<dbReference type="PANTHER" id="PTHR12428">
    <property type="entry name" value="OXA1"/>
    <property type="match status" value="1"/>
</dbReference>
<dbReference type="Pfam" id="PF02096">
    <property type="entry name" value="60KD_IMP"/>
    <property type="match status" value="1"/>
</dbReference>
<dbReference type="Pfam" id="PF14849">
    <property type="entry name" value="YidC_periplas"/>
    <property type="match status" value="1"/>
</dbReference>
<dbReference type="PRINTS" id="PR00701">
    <property type="entry name" value="60KDINNERMP"/>
</dbReference>
<dbReference type="PRINTS" id="PR01900">
    <property type="entry name" value="YIDCPROTEIN"/>
</dbReference>
<name>YIDC_BUCA5</name>
<reference key="1">
    <citation type="journal article" date="2009" name="Science">
        <title>The dynamics and time scale of ongoing genomic erosion in symbiotic bacteria.</title>
        <authorList>
            <person name="Moran N.A."/>
            <person name="McLaughlin H.J."/>
            <person name="Sorek R."/>
        </authorList>
    </citation>
    <scope>NUCLEOTIDE SEQUENCE [LARGE SCALE GENOMIC DNA]</scope>
    <source>
        <strain>5A</strain>
    </source>
</reference>
<proteinExistence type="inferred from homology"/>
<keyword id="KW-1003">Cell membrane</keyword>
<keyword id="KW-0143">Chaperone</keyword>
<keyword id="KW-0472">Membrane</keyword>
<keyword id="KW-0653">Protein transport</keyword>
<keyword id="KW-0812">Transmembrane</keyword>
<keyword id="KW-1133">Transmembrane helix</keyword>
<keyword id="KW-0813">Transport</keyword>
<evidence type="ECO:0000255" key="1">
    <source>
        <dbReference type="HAMAP-Rule" id="MF_01810"/>
    </source>
</evidence>
<organism>
    <name type="scientific">Buchnera aphidicola subsp. Acyrthosiphon pisum (strain 5A)</name>
    <dbReference type="NCBI Taxonomy" id="563178"/>
    <lineage>
        <taxon>Bacteria</taxon>
        <taxon>Pseudomonadati</taxon>
        <taxon>Pseudomonadota</taxon>
        <taxon>Gammaproteobacteria</taxon>
        <taxon>Enterobacterales</taxon>
        <taxon>Erwiniaceae</taxon>
        <taxon>Buchnera</taxon>
    </lineage>
</organism>
<comment type="function">
    <text evidence="1">Required for the insertion and/or proper folding and/or complex formation of integral membrane proteins into the membrane. Involved in integration of membrane proteins that insert both dependently and independently of the Sec translocase complex, as well as at least some lipoproteins. Aids folding of multispanning membrane proteins.</text>
</comment>
<comment type="subunit">
    <text evidence="1">Interacts with the Sec translocase complex via SecD. Specifically interacts with transmembrane segments of nascent integral membrane proteins during membrane integration.</text>
</comment>
<comment type="subcellular location">
    <subcellularLocation>
        <location evidence="1">Cell membrane</location>
        <topology evidence="1">Multi-pass membrane protein</topology>
    </subcellularLocation>
</comment>
<comment type="similarity">
    <text evidence="1">Belongs to the OXA1/ALB3/YidC family. Type 1 subfamily.</text>
</comment>
<feature type="chain" id="PRO_1000187637" description="Membrane protein insertase YidC">
    <location>
        <begin position="1"/>
        <end position="532"/>
    </location>
</feature>
<feature type="transmembrane region" description="Helical" evidence="1">
    <location>
        <begin position="7"/>
        <end position="27"/>
    </location>
</feature>
<feature type="transmembrane region" description="Helical" evidence="1">
    <location>
        <begin position="336"/>
        <end position="356"/>
    </location>
</feature>
<feature type="transmembrane region" description="Helical" evidence="1">
    <location>
        <begin position="413"/>
        <end position="433"/>
    </location>
</feature>
<feature type="transmembrane region" description="Helical" evidence="1">
    <location>
        <begin position="450"/>
        <end position="470"/>
    </location>
</feature>
<feature type="transmembrane region" description="Helical" evidence="1">
    <location>
        <begin position="492"/>
        <end position="512"/>
    </location>
</feature>
<accession>B8D8H9</accession>
<gene>
    <name evidence="1" type="primary">yidC</name>
    <name type="ordered locus">BUAP5A_015</name>
</gene>